<accession>Q02YW7</accession>
<feature type="chain" id="PRO_1000010286" description="Imidazoleglycerol-phosphate dehydratase">
    <location>
        <begin position="1"/>
        <end position="202"/>
    </location>
</feature>
<dbReference type="EC" id="4.2.1.19" evidence="1"/>
<dbReference type="EMBL" id="CP000425">
    <property type="protein sequence ID" value="ABJ72855.1"/>
    <property type="molecule type" value="Genomic_DNA"/>
</dbReference>
<dbReference type="RefSeq" id="WP_011676150.1">
    <property type="nucleotide sequence ID" value="NC_008527.1"/>
</dbReference>
<dbReference type="SMR" id="Q02YW7"/>
<dbReference type="KEGG" id="llc:LACR_1331"/>
<dbReference type="HOGENOM" id="CLU_044308_2_0_9"/>
<dbReference type="UniPathway" id="UPA00031">
    <property type="reaction ID" value="UER00011"/>
</dbReference>
<dbReference type="Proteomes" id="UP000000240">
    <property type="component" value="Chromosome"/>
</dbReference>
<dbReference type="GO" id="GO:0005737">
    <property type="term" value="C:cytoplasm"/>
    <property type="evidence" value="ECO:0007669"/>
    <property type="project" value="UniProtKB-SubCell"/>
</dbReference>
<dbReference type="GO" id="GO:0004424">
    <property type="term" value="F:imidazoleglycerol-phosphate dehydratase activity"/>
    <property type="evidence" value="ECO:0007669"/>
    <property type="project" value="UniProtKB-UniRule"/>
</dbReference>
<dbReference type="GO" id="GO:0000105">
    <property type="term" value="P:L-histidine biosynthetic process"/>
    <property type="evidence" value="ECO:0007669"/>
    <property type="project" value="UniProtKB-UniRule"/>
</dbReference>
<dbReference type="CDD" id="cd07914">
    <property type="entry name" value="IGPD"/>
    <property type="match status" value="1"/>
</dbReference>
<dbReference type="FunFam" id="3.30.230.40:FF:000001">
    <property type="entry name" value="Imidazoleglycerol-phosphate dehydratase HisB"/>
    <property type="match status" value="1"/>
</dbReference>
<dbReference type="FunFam" id="3.30.230.40:FF:000003">
    <property type="entry name" value="Imidazoleglycerol-phosphate dehydratase HisB"/>
    <property type="match status" value="1"/>
</dbReference>
<dbReference type="Gene3D" id="3.30.230.40">
    <property type="entry name" value="Imidazole glycerol phosphate dehydratase, domain 1"/>
    <property type="match status" value="2"/>
</dbReference>
<dbReference type="HAMAP" id="MF_00076">
    <property type="entry name" value="HisB"/>
    <property type="match status" value="1"/>
</dbReference>
<dbReference type="InterPro" id="IPR038494">
    <property type="entry name" value="IGPD_sf"/>
</dbReference>
<dbReference type="InterPro" id="IPR000807">
    <property type="entry name" value="ImidazoleglycerolP_deHydtase"/>
</dbReference>
<dbReference type="InterPro" id="IPR020565">
    <property type="entry name" value="ImidazoleglycerP_deHydtase_CS"/>
</dbReference>
<dbReference type="InterPro" id="IPR020568">
    <property type="entry name" value="Ribosomal_Su5_D2-typ_SF"/>
</dbReference>
<dbReference type="NCBIfam" id="NF002111">
    <property type="entry name" value="PRK00951.2-1"/>
    <property type="match status" value="1"/>
</dbReference>
<dbReference type="NCBIfam" id="NF002114">
    <property type="entry name" value="PRK00951.2-4"/>
    <property type="match status" value="1"/>
</dbReference>
<dbReference type="PANTHER" id="PTHR23133:SF2">
    <property type="entry name" value="IMIDAZOLEGLYCEROL-PHOSPHATE DEHYDRATASE"/>
    <property type="match status" value="1"/>
</dbReference>
<dbReference type="PANTHER" id="PTHR23133">
    <property type="entry name" value="IMIDAZOLEGLYCEROL-PHOSPHATE DEHYDRATASE HIS7"/>
    <property type="match status" value="1"/>
</dbReference>
<dbReference type="Pfam" id="PF00475">
    <property type="entry name" value="IGPD"/>
    <property type="match status" value="1"/>
</dbReference>
<dbReference type="SUPFAM" id="SSF54211">
    <property type="entry name" value="Ribosomal protein S5 domain 2-like"/>
    <property type="match status" value="2"/>
</dbReference>
<dbReference type="PROSITE" id="PS00954">
    <property type="entry name" value="IGP_DEHYDRATASE_1"/>
    <property type="match status" value="1"/>
</dbReference>
<dbReference type="PROSITE" id="PS00955">
    <property type="entry name" value="IGP_DEHYDRATASE_2"/>
    <property type="match status" value="1"/>
</dbReference>
<organism>
    <name type="scientific">Lactococcus lactis subsp. cremoris (strain SK11)</name>
    <dbReference type="NCBI Taxonomy" id="272622"/>
    <lineage>
        <taxon>Bacteria</taxon>
        <taxon>Bacillati</taxon>
        <taxon>Bacillota</taxon>
        <taxon>Bacilli</taxon>
        <taxon>Lactobacillales</taxon>
        <taxon>Streptococcaceae</taxon>
        <taxon>Lactococcus</taxon>
        <taxon>Lactococcus cremoris subsp. cremoris</taxon>
    </lineage>
</organism>
<proteinExistence type="inferred from homology"/>
<protein>
    <recommendedName>
        <fullName evidence="1">Imidazoleglycerol-phosphate dehydratase</fullName>
        <shortName evidence="1">IGPD</shortName>
        <ecNumber evidence="1">4.2.1.19</ecNumber>
    </recommendedName>
</protein>
<evidence type="ECO:0000255" key="1">
    <source>
        <dbReference type="HAMAP-Rule" id="MF_00076"/>
    </source>
</evidence>
<keyword id="KW-0028">Amino-acid biosynthesis</keyword>
<keyword id="KW-0963">Cytoplasm</keyword>
<keyword id="KW-0368">Histidine biosynthesis</keyword>
<keyword id="KW-0456">Lyase</keyword>
<gene>
    <name evidence="1" type="primary">hisB</name>
    <name type="ordered locus">LACR_1331</name>
</gene>
<sequence length="202" mass="22391">MRTATITRETKETQIYLTLDLDGSGRSEIDTNIGFLDHMLTLLAFHSDFDIKLTAHGDHENLGMDPHHLIEDVAISLGKCINEALGDKLGIRRYGSFTIPMDEALVTCDLDISGRPYLVFNADLSGNQKLGGYDTEMTEEFFRALAFNAGITLHINEHYGKNTHHIIEGIFKSMARALKQAISIDETKVGKIPSSKGVLRAN</sequence>
<reference key="1">
    <citation type="journal article" date="2006" name="Proc. Natl. Acad. Sci. U.S.A.">
        <title>Comparative genomics of the lactic acid bacteria.</title>
        <authorList>
            <person name="Makarova K.S."/>
            <person name="Slesarev A."/>
            <person name="Wolf Y.I."/>
            <person name="Sorokin A."/>
            <person name="Mirkin B."/>
            <person name="Koonin E.V."/>
            <person name="Pavlov A."/>
            <person name="Pavlova N."/>
            <person name="Karamychev V."/>
            <person name="Polouchine N."/>
            <person name="Shakhova V."/>
            <person name="Grigoriev I."/>
            <person name="Lou Y."/>
            <person name="Rohksar D."/>
            <person name="Lucas S."/>
            <person name="Huang K."/>
            <person name="Goodstein D.M."/>
            <person name="Hawkins T."/>
            <person name="Plengvidhya V."/>
            <person name="Welker D."/>
            <person name="Hughes J."/>
            <person name="Goh Y."/>
            <person name="Benson A."/>
            <person name="Baldwin K."/>
            <person name="Lee J.-H."/>
            <person name="Diaz-Muniz I."/>
            <person name="Dosti B."/>
            <person name="Smeianov V."/>
            <person name="Wechter W."/>
            <person name="Barabote R."/>
            <person name="Lorca G."/>
            <person name="Altermann E."/>
            <person name="Barrangou R."/>
            <person name="Ganesan B."/>
            <person name="Xie Y."/>
            <person name="Rawsthorne H."/>
            <person name="Tamir D."/>
            <person name="Parker C."/>
            <person name="Breidt F."/>
            <person name="Broadbent J.R."/>
            <person name="Hutkins R."/>
            <person name="O'Sullivan D."/>
            <person name="Steele J."/>
            <person name="Unlu G."/>
            <person name="Saier M.H. Jr."/>
            <person name="Klaenhammer T."/>
            <person name="Richardson P."/>
            <person name="Kozyavkin S."/>
            <person name="Weimer B.C."/>
            <person name="Mills D.A."/>
        </authorList>
    </citation>
    <scope>NUCLEOTIDE SEQUENCE [LARGE SCALE GENOMIC DNA]</scope>
    <source>
        <strain>SK11</strain>
    </source>
</reference>
<comment type="catalytic activity">
    <reaction evidence="1">
        <text>D-erythro-1-(imidazol-4-yl)glycerol 3-phosphate = 3-(imidazol-4-yl)-2-oxopropyl phosphate + H2O</text>
        <dbReference type="Rhea" id="RHEA:11040"/>
        <dbReference type="ChEBI" id="CHEBI:15377"/>
        <dbReference type="ChEBI" id="CHEBI:57766"/>
        <dbReference type="ChEBI" id="CHEBI:58278"/>
        <dbReference type="EC" id="4.2.1.19"/>
    </reaction>
</comment>
<comment type="pathway">
    <text evidence="1">Amino-acid biosynthesis; L-histidine biosynthesis; L-histidine from 5-phospho-alpha-D-ribose 1-diphosphate: step 6/9.</text>
</comment>
<comment type="subcellular location">
    <subcellularLocation>
        <location evidence="1">Cytoplasm</location>
    </subcellularLocation>
</comment>
<comment type="similarity">
    <text evidence="1">Belongs to the imidazoleglycerol-phosphate dehydratase family.</text>
</comment>
<name>HIS7_LACLS</name>